<organism>
    <name type="scientific">Mycobacterium bovis (strain ATCC BAA-935 / AF2122/97)</name>
    <dbReference type="NCBI Taxonomy" id="233413"/>
    <lineage>
        <taxon>Bacteria</taxon>
        <taxon>Bacillati</taxon>
        <taxon>Actinomycetota</taxon>
        <taxon>Actinomycetes</taxon>
        <taxon>Mycobacteriales</taxon>
        <taxon>Mycobacteriaceae</taxon>
        <taxon>Mycobacterium</taxon>
        <taxon>Mycobacterium tuberculosis complex</taxon>
    </lineage>
</organism>
<feature type="chain" id="PRO_0000094022" description="Probable RNA polymerase sigma-C factor">
    <location>
        <begin position="1"/>
        <end position="185"/>
    </location>
</feature>
<feature type="DNA-binding region" description="H-T-H motif" evidence="1">
    <location>
        <begin position="149"/>
        <end position="168"/>
    </location>
</feature>
<feature type="short sequence motif" description="Polymerase core binding">
    <location>
        <begin position="52"/>
        <end position="65"/>
    </location>
</feature>
<dbReference type="EMBL" id="LT708304">
    <property type="protein sequence ID" value="SIU00702.1"/>
    <property type="molecule type" value="Genomic_DNA"/>
</dbReference>
<dbReference type="RefSeq" id="NP_855745.1">
    <property type="nucleotide sequence ID" value="NC_002945.3"/>
</dbReference>
<dbReference type="RefSeq" id="WP_003410678.1">
    <property type="nucleotide sequence ID" value="NC_002945.4"/>
</dbReference>
<dbReference type="SMR" id="P66810"/>
<dbReference type="KEGG" id="mbo:BQ2027_MB2095"/>
<dbReference type="PATRIC" id="fig|233413.5.peg.2304"/>
<dbReference type="Proteomes" id="UP000001419">
    <property type="component" value="Chromosome"/>
</dbReference>
<dbReference type="GO" id="GO:0003677">
    <property type="term" value="F:DNA binding"/>
    <property type="evidence" value="ECO:0007669"/>
    <property type="project" value="UniProtKB-KW"/>
</dbReference>
<dbReference type="GO" id="GO:0016987">
    <property type="term" value="F:sigma factor activity"/>
    <property type="evidence" value="ECO:0007669"/>
    <property type="project" value="UniProtKB-KW"/>
</dbReference>
<dbReference type="GO" id="GO:0006352">
    <property type="term" value="P:DNA-templated transcription initiation"/>
    <property type="evidence" value="ECO:0007669"/>
    <property type="project" value="InterPro"/>
</dbReference>
<dbReference type="GO" id="GO:0006950">
    <property type="term" value="P:response to stress"/>
    <property type="evidence" value="ECO:0007669"/>
    <property type="project" value="UniProtKB-ARBA"/>
</dbReference>
<dbReference type="FunFam" id="1.10.10.10:FF:000545">
    <property type="entry name" value="RNA polymerase sigma factor"/>
    <property type="match status" value="1"/>
</dbReference>
<dbReference type="Gene3D" id="1.10.1740.10">
    <property type="match status" value="1"/>
</dbReference>
<dbReference type="Gene3D" id="1.10.10.10">
    <property type="entry name" value="Winged helix-like DNA-binding domain superfamily/Winged helix DNA-binding domain"/>
    <property type="match status" value="1"/>
</dbReference>
<dbReference type="InterPro" id="IPR039425">
    <property type="entry name" value="RNA_pol_sigma-70-like"/>
</dbReference>
<dbReference type="InterPro" id="IPR014284">
    <property type="entry name" value="RNA_pol_sigma-70_dom"/>
</dbReference>
<dbReference type="InterPro" id="IPR000838">
    <property type="entry name" value="RNA_pol_sigma70_ECF_CS"/>
</dbReference>
<dbReference type="InterPro" id="IPR007627">
    <property type="entry name" value="RNA_pol_sigma70_r2"/>
</dbReference>
<dbReference type="InterPro" id="IPR013249">
    <property type="entry name" value="RNA_pol_sigma70_r4_t2"/>
</dbReference>
<dbReference type="InterPro" id="IPR013325">
    <property type="entry name" value="RNA_pol_sigma_r2"/>
</dbReference>
<dbReference type="InterPro" id="IPR013324">
    <property type="entry name" value="RNA_pol_sigma_r3/r4-like"/>
</dbReference>
<dbReference type="InterPro" id="IPR036388">
    <property type="entry name" value="WH-like_DNA-bd_sf"/>
</dbReference>
<dbReference type="NCBIfam" id="NF007231">
    <property type="entry name" value="PRK09649.1"/>
    <property type="match status" value="1"/>
</dbReference>
<dbReference type="NCBIfam" id="TIGR02937">
    <property type="entry name" value="sigma70-ECF"/>
    <property type="match status" value="1"/>
</dbReference>
<dbReference type="PANTHER" id="PTHR43133:SF61">
    <property type="entry name" value="ECF RNA POLYMERASE SIGMA FACTOR SIGC"/>
    <property type="match status" value="1"/>
</dbReference>
<dbReference type="PANTHER" id="PTHR43133">
    <property type="entry name" value="RNA POLYMERASE ECF-TYPE SIGMA FACTO"/>
    <property type="match status" value="1"/>
</dbReference>
<dbReference type="Pfam" id="PF04542">
    <property type="entry name" value="Sigma70_r2"/>
    <property type="match status" value="1"/>
</dbReference>
<dbReference type="Pfam" id="PF08281">
    <property type="entry name" value="Sigma70_r4_2"/>
    <property type="match status" value="1"/>
</dbReference>
<dbReference type="SUPFAM" id="SSF88946">
    <property type="entry name" value="Sigma2 domain of RNA polymerase sigma factors"/>
    <property type="match status" value="1"/>
</dbReference>
<dbReference type="SUPFAM" id="SSF88659">
    <property type="entry name" value="Sigma3 and sigma4 domains of RNA polymerase sigma factors"/>
    <property type="match status" value="1"/>
</dbReference>
<dbReference type="PROSITE" id="PS01063">
    <property type="entry name" value="SIGMA70_ECF"/>
    <property type="match status" value="1"/>
</dbReference>
<comment type="function">
    <text evidence="1">Sigma factors are initiation factors that promote the attachment of RNA polymerase to specific initiation sites and are then released.</text>
</comment>
<comment type="similarity">
    <text evidence="2">Belongs to the sigma-70 factor family. ECF subfamily.</text>
</comment>
<gene>
    <name type="primary">sigC</name>
    <name type="ordered locus">BQ2027_MB2095</name>
</gene>
<reference key="1">
    <citation type="journal article" date="2003" name="Proc. Natl. Acad. Sci. U.S.A.">
        <title>The complete genome sequence of Mycobacterium bovis.</title>
        <authorList>
            <person name="Garnier T."/>
            <person name="Eiglmeier K."/>
            <person name="Camus J.-C."/>
            <person name="Medina N."/>
            <person name="Mansoor H."/>
            <person name="Pryor M."/>
            <person name="Duthoy S."/>
            <person name="Grondin S."/>
            <person name="Lacroix C."/>
            <person name="Monsempe C."/>
            <person name="Simon S."/>
            <person name="Harris B."/>
            <person name="Atkin R."/>
            <person name="Doggett J."/>
            <person name="Mayes R."/>
            <person name="Keating L."/>
            <person name="Wheeler P.R."/>
            <person name="Parkhill J."/>
            <person name="Barrell B.G."/>
            <person name="Cole S.T."/>
            <person name="Gordon S.V."/>
            <person name="Hewinson R.G."/>
        </authorList>
    </citation>
    <scope>NUCLEOTIDE SEQUENCE [LARGE SCALE GENOMIC DNA]</scope>
    <source>
        <strain>ATCC BAA-935 / AF2122/97</strain>
    </source>
</reference>
<reference key="2">
    <citation type="journal article" date="2017" name="Genome Announc.">
        <title>Updated reference genome sequence and annotation of Mycobacterium bovis AF2122/97.</title>
        <authorList>
            <person name="Malone K.M."/>
            <person name="Farrell D."/>
            <person name="Stuber T.P."/>
            <person name="Schubert O.T."/>
            <person name="Aebersold R."/>
            <person name="Robbe-Austerman S."/>
            <person name="Gordon S.V."/>
        </authorList>
    </citation>
    <scope>NUCLEOTIDE SEQUENCE [LARGE SCALE GENOMIC DNA]</scope>
    <scope>GENOME REANNOTATION</scope>
    <source>
        <strain>ATCC BAA-935 / AF2122/97</strain>
    </source>
</reference>
<name>RPSC_MYCBO</name>
<protein>
    <recommendedName>
        <fullName>Probable RNA polymerase sigma-C factor</fullName>
    </recommendedName>
</protein>
<proteinExistence type="inferred from homology"/>
<sequence length="185" mass="19966">MTATASDDEAVTALALSAAKGNGRALEAFIKATQQDVWRFVAYLSDVGSADDLTQETFLRAIGAIPRFSARSSARTWLLAIARHVVADHIRHVRSRPRTTRGARPEHLIDGDRHARGFEDLVEVTTMIADLTTDQREALLLTQLLGLSYADAAAVCGCPVGTIRSRVARARDALLADAEPDDLTG</sequence>
<evidence type="ECO:0000250" key="1"/>
<evidence type="ECO:0000305" key="2"/>
<keyword id="KW-0238">DNA-binding</keyword>
<keyword id="KW-1185">Reference proteome</keyword>
<keyword id="KW-0731">Sigma factor</keyword>
<keyword id="KW-0804">Transcription</keyword>
<keyword id="KW-0805">Transcription regulation</keyword>
<accession>P66810</accession>
<accession>A0A1R3Y071</accession>
<accession>Q10679</accession>
<accession>X2BK16</accession>